<keyword id="KW-0997">Cell inner membrane</keyword>
<keyword id="KW-1003">Cell membrane</keyword>
<keyword id="KW-0472">Membrane</keyword>
<keyword id="KW-0520">NAD</keyword>
<keyword id="KW-0874">Quinone</keyword>
<keyword id="KW-1185">Reference proteome</keyword>
<keyword id="KW-1278">Translocase</keyword>
<keyword id="KW-0812">Transmembrane</keyword>
<keyword id="KW-1133">Transmembrane helix</keyword>
<keyword id="KW-0813">Transport</keyword>
<keyword id="KW-0830">Ubiquinone</keyword>
<reference key="1">
    <citation type="submission" date="2009-01" db="EMBL/GenBank/DDBJ databases">
        <title>Complete sequence of Geobacter sp. FRC-32.</title>
        <authorList>
            <consortium name="US DOE Joint Genome Institute"/>
            <person name="Lucas S."/>
            <person name="Copeland A."/>
            <person name="Lapidus A."/>
            <person name="Glavina del Rio T."/>
            <person name="Dalin E."/>
            <person name="Tice H."/>
            <person name="Bruce D."/>
            <person name="Goodwin L."/>
            <person name="Pitluck S."/>
            <person name="Saunders E."/>
            <person name="Brettin T."/>
            <person name="Detter J.C."/>
            <person name="Han C."/>
            <person name="Larimer F."/>
            <person name="Land M."/>
            <person name="Hauser L."/>
            <person name="Kyrpides N."/>
            <person name="Ovchinnikova G."/>
            <person name="Kostka J."/>
            <person name="Richardson P."/>
        </authorList>
    </citation>
    <scope>NUCLEOTIDE SEQUENCE [LARGE SCALE GENOMIC DNA]</scope>
    <source>
        <strain>DSM 22248 / JCM 15807 / FRC-32</strain>
    </source>
</reference>
<feature type="chain" id="PRO_0000390080" description="NADH-quinone oxidoreductase subunit K 2">
    <location>
        <begin position="1"/>
        <end position="102"/>
    </location>
</feature>
<feature type="transmembrane region" description="Helical" evidence="1">
    <location>
        <begin position="1"/>
        <end position="21"/>
    </location>
</feature>
<feature type="transmembrane region" description="Helical" evidence="1">
    <location>
        <begin position="30"/>
        <end position="50"/>
    </location>
</feature>
<feature type="transmembrane region" description="Helical" evidence="1">
    <location>
        <begin position="65"/>
        <end position="85"/>
    </location>
</feature>
<protein>
    <recommendedName>
        <fullName evidence="1">NADH-quinone oxidoreductase subunit K 2</fullName>
        <ecNumber evidence="1">7.1.1.-</ecNumber>
    </recommendedName>
    <alternativeName>
        <fullName evidence="1">NADH dehydrogenase I subunit K 2</fullName>
    </alternativeName>
    <alternativeName>
        <fullName evidence="1">NDH-1 subunit K 2</fullName>
    </alternativeName>
</protein>
<dbReference type="EC" id="7.1.1.-" evidence="1"/>
<dbReference type="EMBL" id="CP001390">
    <property type="protein sequence ID" value="ACM19632.1"/>
    <property type="molecule type" value="Genomic_DNA"/>
</dbReference>
<dbReference type="RefSeq" id="WP_012646361.1">
    <property type="nucleotide sequence ID" value="NC_011979.1"/>
</dbReference>
<dbReference type="SMR" id="B9M3Y9"/>
<dbReference type="STRING" id="316067.Geob_1272"/>
<dbReference type="KEGG" id="geo:Geob_1272"/>
<dbReference type="eggNOG" id="COG0713">
    <property type="taxonomic scope" value="Bacteria"/>
</dbReference>
<dbReference type="HOGENOM" id="CLU_144724_0_1_7"/>
<dbReference type="OrthoDB" id="9810120at2"/>
<dbReference type="Proteomes" id="UP000007721">
    <property type="component" value="Chromosome"/>
</dbReference>
<dbReference type="GO" id="GO:0030964">
    <property type="term" value="C:NADH dehydrogenase complex"/>
    <property type="evidence" value="ECO:0007669"/>
    <property type="project" value="TreeGrafter"/>
</dbReference>
<dbReference type="GO" id="GO:0005886">
    <property type="term" value="C:plasma membrane"/>
    <property type="evidence" value="ECO:0007669"/>
    <property type="project" value="UniProtKB-SubCell"/>
</dbReference>
<dbReference type="GO" id="GO:0050136">
    <property type="term" value="F:NADH:ubiquinone reductase (non-electrogenic) activity"/>
    <property type="evidence" value="ECO:0007669"/>
    <property type="project" value="UniProtKB-UniRule"/>
</dbReference>
<dbReference type="GO" id="GO:0048038">
    <property type="term" value="F:quinone binding"/>
    <property type="evidence" value="ECO:0007669"/>
    <property type="project" value="UniProtKB-KW"/>
</dbReference>
<dbReference type="GO" id="GO:0042773">
    <property type="term" value="P:ATP synthesis coupled electron transport"/>
    <property type="evidence" value="ECO:0007669"/>
    <property type="project" value="InterPro"/>
</dbReference>
<dbReference type="FunFam" id="1.10.287.3510:FF:000001">
    <property type="entry name" value="NADH-quinone oxidoreductase subunit K"/>
    <property type="match status" value="1"/>
</dbReference>
<dbReference type="Gene3D" id="1.10.287.3510">
    <property type="match status" value="1"/>
</dbReference>
<dbReference type="HAMAP" id="MF_01456">
    <property type="entry name" value="NDH1_NuoK"/>
    <property type="match status" value="1"/>
</dbReference>
<dbReference type="InterPro" id="IPR001133">
    <property type="entry name" value="NADH_UbQ_OxRdtase_chain4L/K"/>
</dbReference>
<dbReference type="InterPro" id="IPR039428">
    <property type="entry name" value="NUOK/Mnh_C1-like"/>
</dbReference>
<dbReference type="NCBIfam" id="NF004320">
    <property type="entry name" value="PRK05715.1-2"/>
    <property type="match status" value="1"/>
</dbReference>
<dbReference type="PANTHER" id="PTHR11434:SF16">
    <property type="entry name" value="NADH-UBIQUINONE OXIDOREDUCTASE CHAIN 4L"/>
    <property type="match status" value="1"/>
</dbReference>
<dbReference type="PANTHER" id="PTHR11434">
    <property type="entry name" value="NADH-UBIQUINONE OXIDOREDUCTASE SUBUNIT ND4L"/>
    <property type="match status" value="1"/>
</dbReference>
<dbReference type="Pfam" id="PF00420">
    <property type="entry name" value="Oxidored_q2"/>
    <property type="match status" value="1"/>
</dbReference>
<accession>B9M3Y9</accession>
<gene>
    <name evidence="1" type="primary">nuoK2</name>
    <name type="ordered locus">Geob_1272</name>
</gene>
<comment type="function">
    <text evidence="1">NDH-1 shuttles electrons from NADH, via FMN and iron-sulfur (Fe-S) centers, to quinones in the respiratory chain. The immediate electron acceptor for the enzyme in this species is believed to be ubiquinone. Couples the redox reaction to proton translocation (for every two electrons transferred, four hydrogen ions are translocated across the cytoplasmic membrane), and thus conserves the redox energy in a proton gradient.</text>
</comment>
<comment type="catalytic activity">
    <reaction evidence="1">
        <text>a quinone + NADH + 5 H(+)(in) = a quinol + NAD(+) + 4 H(+)(out)</text>
        <dbReference type="Rhea" id="RHEA:57888"/>
        <dbReference type="ChEBI" id="CHEBI:15378"/>
        <dbReference type="ChEBI" id="CHEBI:24646"/>
        <dbReference type="ChEBI" id="CHEBI:57540"/>
        <dbReference type="ChEBI" id="CHEBI:57945"/>
        <dbReference type="ChEBI" id="CHEBI:132124"/>
    </reaction>
</comment>
<comment type="subunit">
    <text evidence="1">NDH-1 is composed of 14 different subunits. Subunits NuoA, H, J, K, L, M, N constitute the membrane sector of the complex.</text>
</comment>
<comment type="subcellular location">
    <subcellularLocation>
        <location evidence="1">Cell inner membrane</location>
        <topology evidence="1">Multi-pass membrane protein</topology>
    </subcellularLocation>
</comment>
<comment type="similarity">
    <text evidence="1">Belongs to the complex I subunit 4L family.</text>
</comment>
<name>NUOK2_GEODF</name>
<evidence type="ECO:0000255" key="1">
    <source>
        <dbReference type="HAMAP-Rule" id="MF_01456"/>
    </source>
</evidence>
<proteinExistence type="inferred from homology"/>
<sequence length="102" mass="11255">MIVPLLHILILAGILFVLGLVCTMVWRMNIIMMLIGIEIMLNAAMLAFVGAANRWGTADGQVFSLMIMAMTSAEVSLALALVVYLHRWRKTVNADDFNSMKG</sequence>
<organism>
    <name type="scientific">Geotalea daltonii (strain DSM 22248 / JCM 15807 / FRC-32)</name>
    <name type="common">Geobacter daltonii</name>
    <dbReference type="NCBI Taxonomy" id="316067"/>
    <lineage>
        <taxon>Bacteria</taxon>
        <taxon>Pseudomonadati</taxon>
        <taxon>Thermodesulfobacteriota</taxon>
        <taxon>Desulfuromonadia</taxon>
        <taxon>Geobacterales</taxon>
        <taxon>Geobacteraceae</taxon>
        <taxon>Geotalea</taxon>
    </lineage>
</organism>